<reference key="1">
    <citation type="journal article" date="2011" name="J. Bacteriol.">
        <title>Complete genome sequence of the plant growth-promoting endophyte Burkholderia phytofirmans strain PsJN.</title>
        <authorList>
            <person name="Weilharter A."/>
            <person name="Mitter B."/>
            <person name="Shin M.V."/>
            <person name="Chain P.S."/>
            <person name="Nowak J."/>
            <person name="Sessitsch A."/>
        </authorList>
    </citation>
    <scope>NUCLEOTIDE SEQUENCE [LARGE SCALE GENOMIC DNA]</scope>
    <source>
        <strain>DSM 17436 / LMG 22146 / PsJN</strain>
    </source>
</reference>
<comment type="function">
    <text evidence="2">Involved in base excision repair of DNA damaged by oxidation or by mutagenic agents. Acts as a DNA glycosylase that recognizes and removes damaged bases. Has a preference for oxidized purines, such as 7,8-dihydro-8-oxoguanine (8-oxoG). Has AP (apurinic/apyrimidinic) lyase activity and introduces nicks in the DNA strand. Cleaves the DNA backbone by beta-delta elimination to generate a single-strand break at the site of the removed base with both 3'- and 5'-phosphates.</text>
</comment>
<comment type="catalytic activity">
    <reaction evidence="2">
        <text>Hydrolysis of DNA containing ring-opened 7-methylguanine residues, releasing 2,6-diamino-4-hydroxy-5-(N-methyl)formamidopyrimidine.</text>
        <dbReference type="EC" id="3.2.2.23"/>
    </reaction>
</comment>
<comment type="catalytic activity">
    <reaction evidence="2">
        <text>2'-deoxyribonucleotide-(2'-deoxyribose 5'-phosphate)-2'-deoxyribonucleotide-DNA = a 3'-end 2'-deoxyribonucleotide-(2,3-dehydro-2,3-deoxyribose 5'-phosphate)-DNA + a 5'-end 5'-phospho-2'-deoxyribonucleoside-DNA + H(+)</text>
        <dbReference type="Rhea" id="RHEA:66592"/>
        <dbReference type="Rhea" id="RHEA-COMP:13180"/>
        <dbReference type="Rhea" id="RHEA-COMP:16897"/>
        <dbReference type="Rhea" id="RHEA-COMP:17067"/>
        <dbReference type="ChEBI" id="CHEBI:15378"/>
        <dbReference type="ChEBI" id="CHEBI:136412"/>
        <dbReference type="ChEBI" id="CHEBI:157695"/>
        <dbReference type="ChEBI" id="CHEBI:167181"/>
        <dbReference type="EC" id="4.2.99.18"/>
    </reaction>
</comment>
<comment type="cofactor">
    <cofactor evidence="2">
        <name>Zn(2+)</name>
        <dbReference type="ChEBI" id="CHEBI:29105"/>
    </cofactor>
    <text evidence="2">Binds 1 zinc ion per subunit.</text>
</comment>
<comment type="subunit">
    <text evidence="2">Monomer.</text>
</comment>
<comment type="similarity">
    <text evidence="2">Belongs to the FPG family.</text>
</comment>
<gene>
    <name evidence="2" type="primary">mutM</name>
    <name evidence="2" type="synonym">fpg</name>
    <name type="ordered locus">Bphyt_0589</name>
</gene>
<feature type="initiator methionine" description="Removed" evidence="1">
    <location>
        <position position="1"/>
    </location>
</feature>
<feature type="chain" id="PRO_1000094037" description="Formamidopyrimidine-DNA glycosylase">
    <location>
        <begin position="2"/>
        <end position="276"/>
    </location>
</feature>
<feature type="zinc finger region" description="FPG-type" evidence="2">
    <location>
        <begin position="242"/>
        <end position="276"/>
    </location>
</feature>
<feature type="active site" description="Schiff-base intermediate with DNA" evidence="2">
    <location>
        <position position="2"/>
    </location>
</feature>
<feature type="active site" description="Proton donor" evidence="2">
    <location>
        <position position="3"/>
    </location>
</feature>
<feature type="active site" description="Proton donor; for beta-elimination activity" evidence="2">
    <location>
        <position position="58"/>
    </location>
</feature>
<feature type="active site" description="Proton donor; for delta-elimination activity" evidence="2">
    <location>
        <position position="266"/>
    </location>
</feature>
<feature type="binding site" evidence="2">
    <location>
        <position position="94"/>
    </location>
    <ligand>
        <name>DNA</name>
        <dbReference type="ChEBI" id="CHEBI:16991"/>
    </ligand>
</feature>
<feature type="binding site" evidence="2">
    <location>
        <position position="112"/>
    </location>
    <ligand>
        <name>DNA</name>
        <dbReference type="ChEBI" id="CHEBI:16991"/>
    </ligand>
</feature>
<feature type="binding site" evidence="2">
    <location>
        <position position="157"/>
    </location>
    <ligand>
        <name>DNA</name>
        <dbReference type="ChEBI" id="CHEBI:16991"/>
    </ligand>
</feature>
<dbReference type="EC" id="3.2.2.23" evidence="2"/>
<dbReference type="EC" id="4.2.99.18" evidence="2"/>
<dbReference type="EMBL" id="CP001052">
    <property type="protein sequence ID" value="ACD15014.1"/>
    <property type="molecule type" value="Genomic_DNA"/>
</dbReference>
<dbReference type="RefSeq" id="WP_012431652.1">
    <property type="nucleotide sequence ID" value="NC_010681.1"/>
</dbReference>
<dbReference type="SMR" id="B2SXG9"/>
<dbReference type="STRING" id="398527.Bphyt_0589"/>
<dbReference type="KEGG" id="bpy:Bphyt_0589"/>
<dbReference type="eggNOG" id="COG0266">
    <property type="taxonomic scope" value="Bacteria"/>
</dbReference>
<dbReference type="HOGENOM" id="CLU_038423_1_1_4"/>
<dbReference type="OrthoDB" id="9800855at2"/>
<dbReference type="Proteomes" id="UP000001739">
    <property type="component" value="Chromosome 1"/>
</dbReference>
<dbReference type="GO" id="GO:0034039">
    <property type="term" value="F:8-oxo-7,8-dihydroguanine DNA N-glycosylase activity"/>
    <property type="evidence" value="ECO:0007669"/>
    <property type="project" value="TreeGrafter"/>
</dbReference>
<dbReference type="GO" id="GO:0140078">
    <property type="term" value="F:class I DNA-(apurinic or apyrimidinic site) endonuclease activity"/>
    <property type="evidence" value="ECO:0007669"/>
    <property type="project" value="UniProtKB-EC"/>
</dbReference>
<dbReference type="GO" id="GO:0003684">
    <property type="term" value="F:damaged DNA binding"/>
    <property type="evidence" value="ECO:0007669"/>
    <property type="project" value="InterPro"/>
</dbReference>
<dbReference type="GO" id="GO:0008270">
    <property type="term" value="F:zinc ion binding"/>
    <property type="evidence" value="ECO:0007669"/>
    <property type="project" value="UniProtKB-UniRule"/>
</dbReference>
<dbReference type="GO" id="GO:0006284">
    <property type="term" value="P:base-excision repair"/>
    <property type="evidence" value="ECO:0007669"/>
    <property type="project" value="InterPro"/>
</dbReference>
<dbReference type="CDD" id="cd08966">
    <property type="entry name" value="EcFpg-like_N"/>
    <property type="match status" value="1"/>
</dbReference>
<dbReference type="FunFam" id="1.10.8.50:FF:000003">
    <property type="entry name" value="Formamidopyrimidine-DNA glycosylase"/>
    <property type="match status" value="1"/>
</dbReference>
<dbReference type="FunFam" id="3.20.190.10:FF:000001">
    <property type="entry name" value="Formamidopyrimidine-DNA glycosylase"/>
    <property type="match status" value="1"/>
</dbReference>
<dbReference type="Gene3D" id="1.10.8.50">
    <property type="match status" value="1"/>
</dbReference>
<dbReference type="Gene3D" id="3.20.190.10">
    <property type="entry name" value="MutM-like, N-terminal"/>
    <property type="match status" value="1"/>
</dbReference>
<dbReference type="HAMAP" id="MF_00103">
    <property type="entry name" value="Fapy_DNA_glycosyl"/>
    <property type="match status" value="1"/>
</dbReference>
<dbReference type="InterPro" id="IPR015886">
    <property type="entry name" value="DNA_glyclase/AP_lyase_DNA-bd"/>
</dbReference>
<dbReference type="InterPro" id="IPR015887">
    <property type="entry name" value="DNA_glyclase_Znf_dom_DNA_BS"/>
</dbReference>
<dbReference type="InterPro" id="IPR020629">
    <property type="entry name" value="Formamido-pyr_DNA_Glyclase"/>
</dbReference>
<dbReference type="InterPro" id="IPR012319">
    <property type="entry name" value="FPG_cat"/>
</dbReference>
<dbReference type="InterPro" id="IPR035937">
    <property type="entry name" value="MutM-like_N-ter"/>
</dbReference>
<dbReference type="InterPro" id="IPR010979">
    <property type="entry name" value="Ribosomal_uS13-like_H2TH"/>
</dbReference>
<dbReference type="InterPro" id="IPR000214">
    <property type="entry name" value="Znf_DNA_glyclase/AP_lyase"/>
</dbReference>
<dbReference type="InterPro" id="IPR010663">
    <property type="entry name" value="Znf_FPG/IleRS"/>
</dbReference>
<dbReference type="NCBIfam" id="TIGR00577">
    <property type="entry name" value="fpg"/>
    <property type="match status" value="1"/>
</dbReference>
<dbReference type="NCBIfam" id="NF002211">
    <property type="entry name" value="PRK01103.1"/>
    <property type="match status" value="1"/>
</dbReference>
<dbReference type="PANTHER" id="PTHR22993">
    <property type="entry name" value="FORMAMIDOPYRIMIDINE-DNA GLYCOSYLASE"/>
    <property type="match status" value="1"/>
</dbReference>
<dbReference type="PANTHER" id="PTHR22993:SF9">
    <property type="entry name" value="FORMAMIDOPYRIMIDINE-DNA GLYCOSYLASE"/>
    <property type="match status" value="1"/>
</dbReference>
<dbReference type="Pfam" id="PF01149">
    <property type="entry name" value="Fapy_DNA_glyco"/>
    <property type="match status" value="1"/>
</dbReference>
<dbReference type="Pfam" id="PF06831">
    <property type="entry name" value="H2TH"/>
    <property type="match status" value="1"/>
</dbReference>
<dbReference type="Pfam" id="PF06827">
    <property type="entry name" value="zf-FPG_IleRS"/>
    <property type="match status" value="1"/>
</dbReference>
<dbReference type="SMART" id="SM00898">
    <property type="entry name" value="Fapy_DNA_glyco"/>
    <property type="match status" value="1"/>
</dbReference>
<dbReference type="SMART" id="SM01232">
    <property type="entry name" value="H2TH"/>
    <property type="match status" value="1"/>
</dbReference>
<dbReference type="SUPFAM" id="SSF57716">
    <property type="entry name" value="Glucocorticoid receptor-like (DNA-binding domain)"/>
    <property type="match status" value="1"/>
</dbReference>
<dbReference type="SUPFAM" id="SSF81624">
    <property type="entry name" value="N-terminal domain of MutM-like DNA repair proteins"/>
    <property type="match status" value="1"/>
</dbReference>
<dbReference type="SUPFAM" id="SSF46946">
    <property type="entry name" value="S13-like H2TH domain"/>
    <property type="match status" value="1"/>
</dbReference>
<dbReference type="PROSITE" id="PS51068">
    <property type="entry name" value="FPG_CAT"/>
    <property type="match status" value="1"/>
</dbReference>
<dbReference type="PROSITE" id="PS01242">
    <property type="entry name" value="ZF_FPG_1"/>
    <property type="match status" value="1"/>
</dbReference>
<dbReference type="PROSITE" id="PS51066">
    <property type="entry name" value="ZF_FPG_2"/>
    <property type="match status" value="1"/>
</dbReference>
<sequence>MPELPEVEVTRRGIEPYVSGRKVERVDVRTPALRWPIPADLAKTLRGHVVRKVERRGKYLLFEIDAGWFIVHLGMTGTLRVLRHVPHPPAAAKHDHIDWIFDEFILRYRDPRRFGAVLWHPREAGDVLEHPLLASLGVEPFSPAFSGALMHRLTRGRKVSVKQALLAGEIVVGVGNIYASESLFRAGIRPTTAAGRVSLVRYELLADAVRVTLAAAIEKGGSTLRDFVGSNGESGYFQLDYFVYDRAGLPCRVCGTPIKQIVQGQRSTYFCPTCQR</sequence>
<accession>B2SXG9</accession>
<protein>
    <recommendedName>
        <fullName evidence="2">Formamidopyrimidine-DNA glycosylase</fullName>
        <shortName evidence="2">Fapy-DNA glycosylase</shortName>
        <ecNumber evidence="2">3.2.2.23</ecNumber>
    </recommendedName>
    <alternativeName>
        <fullName evidence="2">DNA-(apurinic or apyrimidinic site) lyase MutM</fullName>
        <shortName evidence="2">AP lyase MutM</shortName>
        <ecNumber evidence="2">4.2.99.18</ecNumber>
    </alternativeName>
</protein>
<name>FPG_PARPJ</name>
<organism>
    <name type="scientific">Paraburkholderia phytofirmans (strain DSM 17436 / LMG 22146 / PsJN)</name>
    <name type="common">Burkholderia phytofirmans</name>
    <dbReference type="NCBI Taxonomy" id="398527"/>
    <lineage>
        <taxon>Bacteria</taxon>
        <taxon>Pseudomonadati</taxon>
        <taxon>Pseudomonadota</taxon>
        <taxon>Betaproteobacteria</taxon>
        <taxon>Burkholderiales</taxon>
        <taxon>Burkholderiaceae</taxon>
        <taxon>Paraburkholderia</taxon>
    </lineage>
</organism>
<keyword id="KW-0227">DNA damage</keyword>
<keyword id="KW-0234">DNA repair</keyword>
<keyword id="KW-0238">DNA-binding</keyword>
<keyword id="KW-0326">Glycosidase</keyword>
<keyword id="KW-0378">Hydrolase</keyword>
<keyword id="KW-0456">Lyase</keyword>
<keyword id="KW-0479">Metal-binding</keyword>
<keyword id="KW-0511">Multifunctional enzyme</keyword>
<keyword id="KW-0862">Zinc</keyword>
<keyword id="KW-0863">Zinc-finger</keyword>
<evidence type="ECO:0000250" key="1"/>
<evidence type="ECO:0000255" key="2">
    <source>
        <dbReference type="HAMAP-Rule" id="MF_00103"/>
    </source>
</evidence>
<proteinExistence type="inferred from homology"/>